<dbReference type="EC" id="2.7.1.24" evidence="1"/>
<dbReference type="EMBL" id="AE009949">
    <property type="protein sequence ID" value="AAL97252.1"/>
    <property type="molecule type" value="Genomic_DNA"/>
</dbReference>
<dbReference type="RefSeq" id="WP_011017469.1">
    <property type="nucleotide sequence ID" value="NC_003485.1"/>
</dbReference>
<dbReference type="SMR" id="P63834"/>
<dbReference type="KEGG" id="spm:spyM18_0556"/>
<dbReference type="HOGENOM" id="CLU_057180_0_0_9"/>
<dbReference type="UniPathway" id="UPA00241">
    <property type="reaction ID" value="UER00356"/>
</dbReference>
<dbReference type="GO" id="GO:0005737">
    <property type="term" value="C:cytoplasm"/>
    <property type="evidence" value="ECO:0007669"/>
    <property type="project" value="UniProtKB-SubCell"/>
</dbReference>
<dbReference type="GO" id="GO:0005524">
    <property type="term" value="F:ATP binding"/>
    <property type="evidence" value="ECO:0007669"/>
    <property type="project" value="UniProtKB-UniRule"/>
</dbReference>
<dbReference type="GO" id="GO:0004140">
    <property type="term" value="F:dephospho-CoA kinase activity"/>
    <property type="evidence" value="ECO:0007669"/>
    <property type="project" value="UniProtKB-UniRule"/>
</dbReference>
<dbReference type="GO" id="GO:0015937">
    <property type="term" value="P:coenzyme A biosynthetic process"/>
    <property type="evidence" value="ECO:0007669"/>
    <property type="project" value="UniProtKB-UniRule"/>
</dbReference>
<dbReference type="CDD" id="cd02022">
    <property type="entry name" value="DPCK"/>
    <property type="match status" value="1"/>
</dbReference>
<dbReference type="FunFam" id="3.40.50.300:FF:000991">
    <property type="entry name" value="Dephospho-CoA kinase"/>
    <property type="match status" value="1"/>
</dbReference>
<dbReference type="Gene3D" id="3.40.50.300">
    <property type="entry name" value="P-loop containing nucleotide triphosphate hydrolases"/>
    <property type="match status" value="1"/>
</dbReference>
<dbReference type="HAMAP" id="MF_00376">
    <property type="entry name" value="Dephospho_CoA_kinase"/>
    <property type="match status" value="1"/>
</dbReference>
<dbReference type="InterPro" id="IPR001977">
    <property type="entry name" value="Depp_CoAkinase"/>
</dbReference>
<dbReference type="InterPro" id="IPR027417">
    <property type="entry name" value="P-loop_NTPase"/>
</dbReference>
<dbReference type="NCBIfam" id="TIGR00152">
    <property type="entry name" value="dephospho-CoA kinase"/>
    <property type="match status" value="1"/>
</dbReference>
<dbReference type="PANTHER" id="PTHR10695:SF46">
    <property type="entry name" value="BIFUNCTIONAL COENZYME A SYNTHASE-RELATED"/>
    <property type="match status" value="1"/>
</dbReference>
<dbReference type="PANTHER" id="PTHR10695">
    <property type="entry name" value="DEPHOSPHO-COA KINASE-RELATED"/>
    <property type="match status" value="1"/>
</dbReference>
<dbReference type="Pfam" id="PF01121">
    <property type="entry name" value="CoaE"/>
    <property type="match status" value="1"/>
</dbReference>
<dbReference type="SUPFAM" id="SSF52540">
    <property type="entry name" value="P-loop containing nucleoside triphosphate hydrolases"/>
    <property type="match status" value="1"/>
</dbReference>
<dbReference type="PROSITE" id="PS51219">
    <property type="entry name" value="DPCK"/>
    <property type="match status" value="1"/>
</dbReference>
<proteinExistence type="inferred from homology"/>
<feature type="chain" id="PRO_0000173017" description="Dephospho-CoA kinase">
    <location>
        <begin position="1"/>
        <end position="197"/>
    </location>
</feature>
<feature type="domain" description="DPCK" evidence="1">
    <location>
        <begin position="2"/>
        <end position="197"/>
    </location>
</feature>
<feature type="binding site" evidence="1">
    <location>
        <begin position="10"/>
        <end position="15"/>
    </location>
    <ligand>
        <name>ATP</name>
        <dbReference type="ChEBI" id="CHEBI:30616"/>
    </ligand>
</feature>
<evidence type="ECO:0000255" key="1">
    <source>
        <dbReference type="HAMAP-Rule" id="MF_00376"/>
    </source>
</evidence>
<sequence>MIIGITGGIASGKSTVVKVIRKAGYQVIDADQVVHDLQEKGGRLYEALREAFGNQILKADGELDRTKLSEMLFSNPDNMATSSAIQNQIIKEELAAKRDHLAQSQAIFFMDIPLLMELGYQDWFDAIWLVYVDAQTQLQRLMARNRLDKGKARQRIASQLPIEEKKPYASLVIDNNGDMETLIKQVQSALLSLANPR</sequence>
<protein>
    <recommendedName>
        <fullName evidence="1">Dephospho-CoA kinase</fullName>
        <ecNumber evidence="1">2.7.1.24</ecNumber>
    </recommendedName>
    <alternativeName>
        <fullName evidence="1">Dephosphocoenzyme A kinase</fullName>
    </alternativeName>
</protein>
<gene>
    <name evidence="1" type="primary">coaE</name>
    <name type="ordered locus">spyM18_0556</name>
</gene>
<organism>
    <name type="scientific">Streptococcus pyogenes serotype M18 (strain MGAS8232)</name>
    <dbReference type="NCBI Taxonomy" id="186103"/>
    <lineage>
        <taxon>Bacteria</taxon>
        <taxon>Bacillati</taxon>
        <taxon>Bacillota</taxon>
        <taxon>Bacilli</taxon>
        <taxon>Lactobacillales</taxon>
        <taxon>Streptococcaceae</taxon>
        <taxon>Streptococcus</taxon>
    </lineage>
</organism>
<reference key="1">
    <citation type="journal article" date="2002" name="Proc. Natl. Acad. Sci. U.S.A.">
        <title>Genome sequence and comparative microarray analysis of serotype M18 group A Streptococcus strains associated with acute rheumatic fever outbreaks.</title>
        <authorList>
            <person name="Smoot J.C."/>
            <person name="Barbian K.D."/>
            <person name="Van Gompel J.J."/>
            <person name="Smoot L.M."/>
            <person name="Chaussee M.S."/>
            <person name="Sylva G.L."/>
            <person name="Sturdevant D.E."/>
            <person name="Ricklefs S.M."/>
            <person name="Porcella S.F."/>
            <person name="Parkins L.D."/>
            <person name="Beres S.B."/>
            <person name="Campbell D.S."/>
            <person name="Smith T.M."/>
            <person name="Zhang Q."/>
            <person name="Kapur V."/>
            <person name="Daly J.A."/>
            <person name="Veasy L.G."/>
            <person name="Musser J.M."/>
        </authorList>
    </citation>
    <scope>NUCLEOTIDE SEQUENCE [LARGE SCALE GENOMIC DNA]</scope>
    <source>
        <strain>MGAS8232</strain>
    </source>
</reference>
<accession>P63834</accession>
<accession>Q8P249</accession>
<keyword id="KW-0067">ATP-binding</keyword>
<keyword id="KW-0173">Coenzyme A biosynthesis</keyword>
<keyword id="KW-0963">Cytoplasm</keyword>
<keyword id="KW-0418">Kinase</keyword>
<keyword id="KW-0547">Nucleotide-binding</keyword>
<keyword id="KW-0808">Transferase</keyword>
<name>COAE_STRP8</name>
<comment type="function">
    <text evidence="1">Catalyzes the phosphorylation of the 3'-hydroxyl group of dephosphocoenzyme A to form coenzyme A.</text>
</comment>
<comment type="catalytic activity">
    <reaction evidence="1">
        <text>3'-dephospho-CoA + ATP = ADP + CoA + H(+)</text>
        <dbReference type="Rhea" id="RHEA:18245"/>
        <dbReference type="ChEBI" id="CHEBI:15378"/>
        <dbReference type="ChEBI" id="CHEBI:30616"/>
        <dbReference type="ChEBI" id="CHEBI:57287"/>
        <dbReference type="ChEBI" id="CHEBI:57328"/>
        <dbReference type="ChEBI" id="CHEBI:456216"/>
        <dbReference type="EC" id="2.7.1.24"/>
    </reaction>
</comment>
<comment type="pathway">
    <text evidence="1">Cofactor biosynthesis; coenzyme A biosynthesis; CoA from (R)-pantothenate: step 5/5.</text>
</comment>
<comment type="subcellular location">
    <subcellularLocation>
        <location evidence="1">Cytoplasm</location>
    </subcellularLocation>
</comment>
<comment type="similarity">
    <text evidence="1">Belongs to the CoaE family.</text>
</comment>